<protein>
    <recommendedName>
        <fullName>Cytochrome b</fullName>
    </recommendedName>
    <alternativeName>
        <fullName>Complex III subunit 3</fullName>
    </alternativeName>
    <alternativeName>
        <fullName>Complex III subunit III</fullName>
    </alternativeName>
    <alternativeName>
        <fullName>Cytochrome b-c1 complex subunit 3</fullName>
    </alternativeName>
    <alternativeName>
        <fullName>Ubiquinol-cytochrome-c reductase complex cytochrome b subunit</fullName>
    </alternativeName>
</protein>
<dbReference type="EMBL" id="AF039270">
    <property type="protein sequence ID" value="AAC33547.1"/>
    <property type="molecule type" value="Genomic_DNA"/>
</dbReference>
<dbReference type="GO" id="GO:0005743">
    <property type="term" value="C:mitochondrial inner membrane"/>
    <property type="evidence" value="ECO:0007669"/>
    <property type="project" value="UniProtKB-SubCell"/>
</dbReference>
<dbReference type="GO" id="GO:0046872">
    <property type="term" value="F:metal ion binding"/>
    <property type="evidence" value="ECO:0007669"/>
    <property type="project" value="UniProtKB-KW"/>
</dbReference>
<dbReference type="GO" id="GO:0008121">
    <property type="term" value="F:ubiquinol-cytochrome-c reductase activity"/>
    <property type="evidence" value="ECO:0007669"/>
    <property type="project" value="TreeGrafter"/>
</dbReference>
<dbReference type="GO" id="GO:0006122">
    <property type="term" value="P:mitochondrial electron transport, ubiquinol to cytochrome c"/>
    <property type="evidence" value="ECO:0007669"/>
    <property type="project" value="TreeGrafter"/>
</dbReference>
<dbReference type="CDD" id="cd00284">
    <property type="entry name" value="Cytochrome_b_N"/>
    <property type="match status" value="1"/>
</dbReference>
<dbReference type="Gene3D" id="1.20.810.10">
    <property type="entry name" value="Cytochrome Bc1 Complex, Chain C"/>
    <property type="match status" value="1"/>
</dbReference>
<dbReference type="InterPro" id="IPR005797">
    <property type="entry name" value="Cyt_b/b6_N"/>
</dbReference>
<dbReference type="InterPro" id="IPR027387">
    <property type="entry name" value="Cytb/b6-like_sf"/>
</dbReference>
<dbReference type="InterPro" id="IPR048259">
    <property type="entry name" value="Cytochrome_b_N_euk/bac"/>
</dbReference>
<dbReference type="InterPro" id="IPR016174">
    <property type="entry name" value="Di-haem_cyt_TM"/>
</dbReference>
<dbReference type="PANTHER" id="PTHR19271">
    <property type="entry name" value="CYTOCHROME B"/>
    <property type="match status" value="1"/>
</dbReference>
<dbReference type="PANTHER" id="PTHR19271:SF16">
    <property type="entry name" value="CYTOCHROME B"/>
    <property type="match status" value="1"/>
</dbReference>
<dbReference type="Pfam" id="PF00033">
    <property type="entry name" value="Cytochrome_B"/>
    <property type="match status" value="1"/>
</dbReference>
<dbReference type="SUPFAM" id="SSF81342">
    <property type="entry name" value="Transmembrane di-heme cytochromes"/>
    <property type="match status" value="1"/>
</dbReference>
<dbReference type="PROSITE" id="PS51002">
    <property type="entry name" value="CYTB_NTER"/>
    <property type="match status" value="1"/>
</dbReference>
<name>CYB_BOTSC</name>
<accession>P92849</accession>
<comment type="function">
    <text evidence="2">Component of the ubiquinol-cytochrome c reductase complex (complex III or cytochrome b-c1 complex) that is part of the mitochondrial respiratory chain. The b-c1 complex mediates electron transfer from ubiquinol to cytochrome c. Contributes to the generation of a proton gradient across the mitochondrial membrane that is then used for ATP synthesis.</text>
</comment>
<comment type="cofactor">
    <cofactor evidence="2">
        <name>heme b</name>
        <dbReference type="ChEBI" id="CHEBI:60344"/>
    </cofactor>
    <text evidence="2">Binds 2 heme b groups non-covalently.</text>
</comment>
<comment type="subunit">
    <text evidence="2">The cytochrome bc1 complex contains 3 respiratory subunits (MT-CYB, CYC1 and UQCRFS1), 2 core proteins (UQCRC1 and UQCRC2) and probably 6 low-molecular weight proteins.</text>
</comment>
<comment type="subcellular location">
    <subcellularLocation>
        <location evidence="2">Mitochondrion inner membrane</location>
        <topology evidence="2">Multi-pass membrane protein</topology>
    </subcellularLocation>
</comment>
<comment type="miscellaneous">
    <text evidence="1">Heme 1 (or BL or b562) is low-potential and absorbs at about 562 nm, and heme 2 (or BH or b566) is high-potential and absorbs at about 566 nm.</text>
</comment>
<comment type="similarity">
    <text evidence="3">Belongs to the cytochrome b family.</text>
</comment>
<comment type="caution">
    <text evidence="2">The full-length protein contains only eight transmembrane helices, not nine as predicted by bioinformatics tools.</text>
</comment>
<proteinExistence type="inferred from homology"/>
<reference key="1">
    <citation type="journal article" date="1998" name="Mol. Phylogenet. Evol.">
        <title>Weighting and congruence: a case study based on three mitochondrial genes in pitvipers.</title>
        <authorList>
            <person name="Vidal N."/>
            <person name="Lecointre G."/>
        </authorList>
    </citation>
    <scope>NUCLEOTIDE SEQUENCE [GENOMIC DNA]</scope>
</reference>
<reference key="2">
    <citation type="journal article" date="1997" name="C. R. Acad. Sci. III, Sci. Vie">
        <title>Molecular systematics of pitvipers: paraphyly of the Bothrops complex.</title>
        <authorList>
            <person name="Vidal N."/>
            <person name="Lecointre G."/>
            <person name="Vie J.-C."/>
            <person name="Gasc J.-P."/>
        </authorList>
    </citation>
    <scope>NUCLEOTIDE SEQUENCE [GENOMIC DNA] OF 1-132</scope>
</reference>
<sequence length="214" mass="24041">YINYKNMSHQHMLTLFNLLPVGSNISIWWNFGSMLLACLMIQTITGFFLAIHYTANIDLAFSSIVHISRDVPCGWIMQNTXAIGASMFFICIYIHIARGIYYGSYLNKEVWLSGTTLLITLMATAFFGYVLPWGQMSFWAATVITNLLTAIPYLGTTLTTWLWGGFAINDPTLTRFFALHFILPFIIISLSSAHILLLHNEGSNNPLGTNSDID</sequence>
<organism>
    <name type="scientific">Bothriechis schlegelii</name>
    <name type="common">Eyelash palm pitviper</name>
    <dbReference type="NCBI Taxonomy" id="44725"/>
    <lineage>
        <taxon>Eukaryota</taxon>
        <taxon>Metazoa</taxon>
        <taxon>Chordata</taxon>
        <taxon>Craniata</taxon>
        <taxon>Vertebrata</taxon>
        <taxon>Euteleostomi</taxon>
        <taxon>Lepidosauria</taxon>
        <taxon>Squamata</taxon>
        <taxon>Bifurcata</taxon>
        <taxon>Unidentata</taxon>
        <taxon>Episquamata</taxon>
        <taxon>Toxicofera</taxon>
        <taxon>Serpentes</taxon>
        <taxon>Colubroidea</taxon>
        <taxon>Viperidae</taxon>
        <taxon>Crotalinae</taxon>
        <taxon>Bothriechis</taxon>
    </lineage>
</organism>
<feature type="chain" id="PRO_0000060684" description="Cytochrome b">
    <location>
        <begin position="1" status="less than"/>
        <end position="214" status="greater than"/>
    </location>
</feature>
<feature type="transmembrane region" description="Helical" evidence="3">
    <location>
        <begin position="31"/>
        <end position="51"/>
    </location>
</feature>
<feature type="transmembrane region" description="Helical" evidence="2">
    <location>
        <begin position="75"/>
        <end position="96"/>
    </location>
</feature>
<feature type="transmembrane region" description="Helical" evidence="2">
    <location>
        <begin position="111"/>
        <end position="131"/>
    </location>
</feature>
<feature type="transmembrane region" description="Helical" evidence="3">
    <location>
        <begin position="176"/>
        <end position="196"/>
    </location>
</feature>
<feature type="binding site" description="axial binding residue" evidence="2">
    <location>
        <position position="81"/>
    </location>
    <ligand>
        <name>heme b</name>
        <dbReference type="ChEBI" id="CHEBI:60344"/>
        <label>b562</label>
    </ligand>
    <ligandPart>
        <name>Fe</name>
        <dbReference type="ChEBI" id="CHEBI:18248"/>
    </ligandPart>
</feature>
<feature type="binding site" description="axial binding residue" evidence="2">
    <location>
        <position position="95"/>
    </location>
    <ligand>
        <name>heme b</name>
        <dbReference type="ChEBI" id="CHEBI:60344"/>
        <label>b566</label>
    </ligand>
    <ligandPart>
        <name>Fe</name>
        <dbReference type="ChEBI" id="CHEBI:18248"/>
    </ligandPart>
</feature>
<feature type="binding site" description="axial binding residue" evidence="2">
    <location>
        <position position="180"/>
    </location>
    <ligand>
        <name>heme b</name>
        <dbReference type="ChEBI" id="CHEBI:60344"/>
        <label>b562</label>
    </ligand>
    <ligandPart>
        <name>Fe</name>
        <dbReference type="ChEBI" id="CHEBI:18248"/>
    </ligandPart>
</feature>
<feature type="binding site" description="axial binding residue" evidence="2">
    <location>
        <position position="194"/>
    </location>
    <ligand>
        <name>heme b</name>
        <dbReference type="ChEBI" id="CHEBI:60344"/>
        <label>b566</label>
    </ligand>
    <ligandPart>
        <name>Fe</name>
        <dbReference type="ChEBI" id="CHEBI:18248"/>
    </ligandPart>
</feature>
<feature type="binding site" evidence="2">
    <location>
        <position position="199"/>
    </location>
    <ligand>
        <name>a ubiquinone</name>
        <dbReference type="ChEBI" id="CHEBI:16389"/>
    </ligand>
</feature>
<feature type="non-terminal residue">
    <location>
        <position position="1"/>
    </location>
</feature>
<feature type="non-terminal residue">
    <location>
        <position position="214"/>
    </location>
</feature>
<evidence type="ECO:0000250" key="1"/>
<evidence type="ECO:0000250" key="2">
    <source>
        <dbReference type="UniProtKB" id="P00157"/>
    </source>
</evidence>
<evidence type="ECO:0000255" key="3">
    <source>
        <dbReference type="PROSITE-ProRule" id="PRU00968"/>
    </source>
</evidence>
<gene>
    <name type="primary">MT-CYB</name>
    <name type="synonym">COB</name>
    <name type="synonym">CYTB</name>
    <name type="synonym">MTCYB</name>
</gene>
<keyword id="KW-0249">Electron transport</keyword>
<keyword id="KW-0349">Heme</keyword>
<keyword id="KW-0408">Iron</keyword>
<keyword id="KW-0472">Membrane</keyword>
<keyword id="KW-0479">Metal-binding</keyword>
<keyword id="KW-0496">Mitochondrion</keyword>
<keyword id="KW-0999">Mitochondrion inner membrane</keyword>
<keyword id="KW-0679">Respiratory chain</keyword>
<keyword id="KW-0812">Transmembrane</keyword>
<keyword id="KW-1133">Transmembrane helix</keyword>
<keyword id="KW-0813">Transport</keyword>
<keyword id="KW-0830">Ubiquinone</keyword>
<geneLocation type="mitochondrion"/>